<proteinExistence type="inferred from homology"/>
<feature type="chain" id="PRO_0000295374" description="PAN2-PAN3 deadenylation complex subunit PAN3">
    <location>
        <begin position="1"/>
        <end position="669"/>
    </location>
</feature>
<feature type="zinc finger region" description="C3H1-type" evidence="1">
    <location>
        <begin position="25"/>
        <end position="54"/>
    </location>
</feature>
<feature type="region of interest" description="Disordered" evidence="2">
    <location>
        <begin position="1"/>
        <end position="25"/>
    </location>
</feature>
<feature type="region of interest" description="Pseudokinase domain" evidence="1">
    <location>
        <begin position="247"/>
        <end position="519"/>
    </location>
</feature>
<feature type="region of interest" description="Knob domain" evidence="1">
    <location>
        <begin position="559"/>
        <end position="669"/>
    </location>
</feature>
<feature type="coiled-coil region" evidence="1">
    <location>
        <begin position="520"/>
        <end position="558"/>
    </location>
</feature>
<feature type="compositionally biased region" description="Polar residues" evidence="2">
    <location>
        <begin position="1"/>
        <end position="10"/>
    </location>
</feature>
<feature type="binding site" evidence="1">
    <location>
        <position position="298"/>
    </location>
    <ligand>
        <name>ATP</name>
        <dbReference type="ChEBI" id="CHEBI:30616"/>
    </ligand>
</feature>
<feature type="binding site" evidence="1">
    <location>
        <begin position="347"/>
        <end position="354"/>
    </location>
    <ligand>
        <name>ATP</name>
        <dbReference type="ChEBI" id="CHEBI:30616"/>
    </ligand>
</feature>
<feature type="binding site" evidence="1">
    <location>
        <begin position="408"/>
        <end position="409"/>
    </location>
    <ligand>
        <name>ATP</name>
        <dbReference type="ChEBI" id="CHEBI:30616"/>
    </ligand>
</feature>
<sequence length="669" mass="73827">MATTFGSPSGDSRRGVASPRPKGREAKNTFCRNVTIYGHCRYENSKCRPPHLPDHVLNQNENAKKRFNVDSPSFTPLTTTPNGSVTASARNAAISPKAANAAVFTPKSQRSAVSTPNLHNKEPALDWHAPDFQEFVPETFGGPMVDSNASASYSGYDPYTSSANLASIAGQGHQSSAMNPYAQGHSGLEASYYQNPSAFQTSPAYHLYWPVGPQPTSLLGYQRTAHDFFIPDALREDLQKRAEVARQVMPNSTLPVIEQFHSLFCLDTTPQKNNAPFGYVSWIYKAISGKDGKTYALRRLENFRLTSEPAIRSAQAWKRIFNGSIVTIHEAFTTRAFGDSSLIIVTDYHPNSKSLADEHFKPMQRFNGRQATSSHVPEHVLWGYIVQIASALKAIHGSGLAARLISPSKTLLTAKNRIRLNACAIMDIVQFETARPVAEAQADDFVQLGRMILCIANNNTTAHLQMQKSMDHVTRNYTARLKECIQWLLNPQPPLGTPSSPTTPAPGSKDIDNFLGGISDQLASVFDSELHAQDTLTNTLGRELESSRIVRLLVKLNMVNERPELDASQQMSGGNTSNPSSVWAETGERYYLKLFRDYVFHQVDANGHPVTDLAHVLDCLNKLDAGTDEKIALISRDEQNVLIVSFREVKRGLEIAFQDLIRAGRGQGK</sequence>
<reference key="1">
    <citation type="journal article" date="2007" name="Plant Cell">
        <title>Dothideomycete-plant interactions illuminated by genome sequencing and EST analysis of the wheat pathogen Stagonospora nodorum.</title>
        <authorList>
            <person name="Hane J.K."/>
            <person name="Lowe R.G.T."/>
            <person name="Solomon P.S."/>
            <person name="Tan K.-C."/>
            <person name="Schoch C.L."/>
            <person name="Spatafora J.W."/>
            <person name="Crous P.W."/>
            <person name="Kodira C.D."/>
            <person name="Birren B.W."/>
            <person name="Galagan J.E."/>
            <person name="Torriani S.F.F."/>
            <person name="McDonald B.A."/>
            <person name="Oliver R.P."/>
        </authorList>
    </citation>
    <scope>NUCLEOTIDE SEQUENCE [LARGE SCALE GENOMIC DNA]</scope>
    <source>
        <strain>SN15 / ATCC MYA-4574 / FGSC 10173</strain>
    </source>
</reference>
<name>PAN3_PHANO</name>
<evidence type="ECO:0000255" key="1">
    <source>
        <dbReference type="HAMAP-Rule" id="MF_03181"/>
    </source>
</evidence>
<evidence type="ECO:0000256" key="2">
    <source>
        <dbReference type="SAM" id="MobiDB-lite"/>
    </source>
</evidence>
<evidence type="ECO:0000305" key="3"/>
<organism>
    <name type="scientific">Phaeosphaeria nodorum (strain SN15 / ATCC MYA-4574 / FGSC 10173)</name>
    <name type="common">Glume blotch fungus</name>
    <name type="synonym">Parastagonospora nodorum</name>
    <dbReference type="NCBI Taxonomy" id="321614"/>
    <lineage>
        <taxon>Eukaryota</taxon>
        <taxon>Fungi</taxon>
        <taxon>Dikarya</taxon>
        <taxon>Ascomycota</taxon>
        <taxon>Pezizomycotina</taxon>
        <taxon>Dothideomycetes</taxon>
        <taxon>Pleosporomycetidae</taxon>
        <taxon>Pleosporales</taxon>
        <taxon>Pleosporineae</taxon>
        <taxon>Phaeosphaeriaceae</taxon>
        <taxon>Parastagonospora</taxon>
    </lineage>
</organism>
<comment type="function">
    <text evidence="1">Regulatory subunit of the poly(A)-nuclease (PAN) deadenylation complex, one of two cytoplasmic mRNA deadenylases involved in mRNA turnover. PAN specifically shortens poly(A) tails of RNA and the activity is stimulated by poly(A)-binding protein PAB1. PAN deadenylation is followed by rapid degradation of the shortened mRNA tails by the CCR4-NOT complex. Deadenylated mRNAs are then degraded by two alternative mechanisms, namely exosome-mediated 3'-5' exonucleolytic degradation, or deadenylation-dependent mRNA decaping and subsequent 5'-3' exonucleolytic degradation by XRN1. May also be involved in post-transcriptional maturation of mRNA poly(A) tails. PAN3 acts as a positive regulator for PAN activity, recruiting the catalytic subunit PAN2 to mRNA via its interaction with RNA and with PAB1.</text>
</comment>
<comment type="subunit">
    <text evidence="1">Homodimer. Forms a heterotrimer with a catalytic subunit PAN2 to form the poly(A)-nuclease (PAN) deadenylation complex. Interacts (via PAM-2 motif) with poly(A)-binding protein PAB1 (via PABC domain), conferring substrate specificity of the enzyme complex.</text>
</comment>
<comment type="subcellular location">
    <subcellularLocation>
        <location evidence="1">Cytoplasm</location>
    </subcellularLocation>
</comment>
<comment type="domain">
    <text evidence="1">The N-terminal zinc finger binds to poly(A) RNA.</text>
</comment>
<comment type="domain">
    <text evidence="1">Contains a pseudokinase domain. The protein kinase domain is predicted to be catalytically inactive because some of the residues important for catalytic activity are substituted and it lacks the equivalent of the binding site for a peptide substrate. However, it has retained an ATP-binding site and ATP-binding is required for mRNA degradation, stimulating the activity of the PAN2 nuclease in vitro. The nucleotide-binding site is juxtaposed to the RNase active site of PAN2 in the complex and may actually bind nucleosides of a poly(A) RNA rather than ATP, feeding the poly(A)-tail to the active site of the deadenylase and thus increasing the efficiency with which this distributive enzyme degrades oligo(A) RNAs.</text>
</comment>
<comment type="domain">
    <text evidence="1">The pseudokinase domain, the coiled-coil (CC), and C-terminal knob domain (CK) form a structural unit (PKC) that forms an extensive high-affinity interaction surface for PAN2.</text>
</comment>
<comment type="similarity">
    <text evidence="1">Belongs to the protein kinase superfamily. PAN3 family.</text>
</comment>
<comment type="sequence caution" evidence="3">
    <conflict type="erroneous gene model prediction">
        <sequence resource="EMBL-CDS" id="EAT90692"/>
    </conflict>
</comment>
<keyword id="KW-0067">ATP-binding</keyword>
<keyword id="KW-0175">Coiled coil</keyword>
<keyword id="KW-0963">Cytoplasm</keyword>
<keyword id="KW-0479">Metal-binding</keyword>
<keyword id="KW-0507">mRNA processing</keyword>
<keyword id="KW-0547">Nucleotide-binding</keyword>
<keyword id="KW-0862">Zinc</keyword>
<keyword id="KW-0863">Zinc-finger</keyword>
<protein>
    <recommendedName>
        <fullName evidence="1">PAN2-PAN3 deadenylation complex subunit PAN3</fullName>
    </recommendedName>
    <alternativeName>
        <fullName evidence="1">PAB1P-dependent poly(A)-specific ribonuclease</fullName>
    </alternativeName>
    <alternativeName>
        <fullName evidence="1">Poly(A)-nuclease deadenylation complex subunit 3</fullName>
        <shortName evidence="1">PAN deadenylation complex subunit 3</shortName>
    </alternativeName>
</protein>
<dbReference type="EMBL" id="CH445327">
    <property type="protein sequence ID" value="EAT90692.2"/>
    <property type="status" value="ALT_SEQ"/>
    <property type="molecule type" value="Genomic_DNA"/>
</dbReference>
<dbReference type="RefSeq" id="XP_001793086.1">
    <property type="nucleotide sequence ID" value="XM_001793034.1"/>
</dbReference>
<dbReference type="SMR" id="Q0V0I4"/>
<dbReference type="FunCoup" id="Q0V0I4">
    <property type="interactions" value="591"/>
</dbReference>
<dbReference type="STRING" id="321614.Q0V0I4"/>
<dbReference type="GeneID" id="5969936"/>
<dbReference type="KEGG" id="pno:SNOG_02480"/>
<dbReference type="VEuPathDB" id="FungiDB:JI435_024800"/>
<dbReference type="VEuPathDB" id="FungiDB:JI435_402340"/>
<dbReference type="eggNOG" id="KOG3741">
    <property type="taxonomic scope" value="Eukaryota"/>
</dbReference>
<dbReference type="InParanoid" id="Q0V0I4"/>
<dbReference type="Proteomes" id="UP000001055">
    <property type="component" value="Unassembled WGS sequence"/>
</dbReference>
<dbReference type="GO" id="GO:0000932">
    <property type="term" value="C:P-body"/>
    <property type="evidence" value="ECO:0000318"/>
    <property type="project" value="GO_Central"/>
</dbReference>
<dbReference type="GO" id="GO:0031251">
    <property type="term" value="C:PAN complex"/>
    <property type="evidence" value="ECO:0000318"/>
    <property type="project" value="GO_Central"/>
</dbReference>
<dbReference type="GO" id="GO:0005524">
    <property type="term" value="F:ATP binding"/>
    <property type="evidence" value="ECO:0007669"/>
    <property type="project" value="UniProtKB-UniRule"/>
</dbReference>
<dbReference type="GO" id="GO:0008143">
    <property type="term" value="F:poly(A) binding"/>
    <property type="evidence" value="ECO:0000318"/>
    <property type="project" value="GO_Central"/>
</dbReference>
<dbReference type="GO" id="GO:0008270">
    <property type="term" value="F:zinc ion binding"/>
    <property type="evidence" value="ECO:0007669"/>
    <property type="project" value="UniProtKB-KW"/>
</dbReference>
<dbReference type="GO" id="GO:0006397">
    <property type="term" value="P:mRNA processing"/>
    <property type="evidence" value="ECO:0007669"/>
    <property type="project" value="UniProtKB-KW"/>
</dbReference>
<dbReference type="GO" id="GO:0000289">
    <property type="term" value="P:nuclear-transcribed mRNA poly(A) tail shortening"/>
    <property type="evidence" value="ECO:0000318"/>
    <property type="project" value="GO_Central"/>
</dbReference>
<dbReference type="FunFam" id="1.10.287.3700:FF:000001">
    <property type="entry name" value="PAN2-PAN3 deadenylation complex subunit PAN3"/>
    <property type="match status" value="1"/>
</dbReference>
<dbReference type="FunFam" id="1.10.510.10:FF:000520">
    <property type="entry name" value="PAN2-PAN3 deadenylation complex subunit PAN3"/>
    <property type="match status" value="1"/>
</dbReference>
<dbReference type="FunFam" id="1.20.5.5160:FF:000007">
    <property type="entry name" value="PAN2-PAN3 deadenylation complex subunit PAN3"/>
    <property type="match status" value="1"/>
</dbReference>
<dbReference type="Gene3D" id="1.10.287.3700">
    <property type="match status" value="1"/>
</dbReference>
<dbReference type="Gene3D" id="1.20.5.5160">
    <property type="match status" value="1"/>
</dbReference>
<dbReference type="Gene3D" id="6.10.250.3160">
    <property type="match status" value="1"/>
</dbReference>
<dbReference type="Gene3D" id="1.10.510.10">
    <property type="entry name" value="Transferase(Phosphotransferase) domain 1"/>
    <property type="match status" value="1"/>
</dbReference>
<dbReference type="HAMAP" id="MF_03181">
    <property type="entry name" value="PAN3"/>
    <property type="match status" value="1"/>
</dbReference>
<dbReference type="InterPro" id="IPR011009">
    <property type="entry name" value="Kinase-like_dom_sf"/>
</dbReference>
<dbReference type="InterPro" id="IPR030844">
    <property type="entry name" value="PAN3"/>
</dbReference>
<dbReference type="InterPro" id="IPR041332">
    <property type="entry name" value="Pan3_PK"/>
</dbReference>
<dbReference type="PANTHER" id="PTHR12272">
    <property type="entry name" value="DEADENYLATION COMPLEX SUBUNIT PAN3"/>
    <property type="match status" value="1"/>
</dbReference>
<dbReference type="PANTHER" id="PTHR12272:SF11">
    <property type="entry name" value="PAN2-PAN3 DEADENYLATION COMPLEX SUBUNIT PAN3"/>
    <property type="match status" value="1"/>
</dbReference>
<dbReference type="Pfam" id="PF18101">
    <property type="entry name" value="Pan3_PK"/>
    <property type="match status" value="1"/>
</dbReference>
<dbReference type="SUPFAM" id="SSF56112">
    <property type="entry name" value="Protein kinase-like (PK-like)"/>
    <property type="match status" value="1"/>
</dbReference>
<gene>
    <name evidence="1" type="primary">PAN3</name>
    <name type="ORF">SNOG_02480</name>
</gene>
<accession>Q0V0I4</accession>